<evidence type="ECO:0000305" key="1"/>
<comment type="catalytic activity">
    <reaction>
        <text>L-aspartate + ATP = 4-phospho-L-aspartate + ADP</text>
        <dbReference type="Rhea" id="RHEA:23776"/>
        <dbReference type="ChEBI" id="CHEBI:29991"/>
        <dbReference type="ChEBI" id="CHEBI:30616"/>
        <dbReference type="ChEBI" id="CHEBI:57535"/>
        <dbReference type="ChEBI" id="CHEBI:456216"/>
        <dbReference type="EC" id="2.7.2.4"/>
    </reaction>
</comment>
<comment type="pathway">
    <text>Amino-acid biosynthesis; L-lysine biosynthesis via DAP pathway; (S)-tetrahydrodipicolinate from L-aspartate: step 1/4.</text>
</comment>
<comment type="pathway">
    <text>Amino-acid biosynthesis; L-methionine biosynthesis via de novo pathway; L-homoserine from L-aspartate: step 1/3.</text>
</comment>
<comment type="pathway">
    <text>Amino-acid biosynthesis; L-threonine biosynthesis; L-threonine from L-aspartate: step 1/5.</text>
</comment>
<comment type="similarity">
    <text evidence="1">Belongs to the aspartokinase family.</text>
</comment>
<sequence>MFKEKKAPLVCKFGGTSVGTSSSIQRVCEIIRKEKPSFVVVSAVAGVTDLLEEFCRAPVGQKSQFTAMIREKHESIAKELGIDVAIEPFLGPLKQFEGAGHLQQEDQAKILAIGEDLSASLICSYCRANSLQLEQLEARQVILTDSQFLRAEPDLALMQTMWGELVLKENTIYLMQGFLGATASGATTVLGRGGSDFSASLVGELCEARELRIYTDVRGVHTADPKILKDTQLIDFLTFEEMQELASSGSKVLHQDMLKPCIRAKVPIFVTSTFDLTKEGTWICASLNEGVEGPEIKALSLKANQALWFVEYHSPLMRLENVLRCVRGLGSIPGVVMAQNSGVYFTVDWEENNQSMTEALREFGAVSCEGPVSLVALVGAKLTSWSMTGVFDALQGTPVLYWSQTDTVINLIINEESGVVVTKLLHDYVLGLNRSGL</sequence>
<keyword id="KW-0028">Amino-acid biosynthesis</keyword>
<keyword id="KW-0067">ATP-binding</keyword>
<keyword id="KW-0220">Diaminopimelate biosynthesis</keyword>
<keyword id="KW-0418">Kinase</keyword>
<keyword id="KW-0457">Lysine biosynthesis</keyword>
<keyword id="KW-0547">Nucleotide-binding</keyword>
<keyword id="KW-0808">Transferase</keyword>
<organism>
    <name type="scientific">Chlamydia muridarum (strain MoPn / Nigg)</name>
    <dbReference type="NCBI Taxonomy" id="243161"/>
    <lineage>
        <taxon>Bacteria</taxon>
        <taxon>Pseudomonadati</taxon>
        <taxon>Chlamydiota</taxon>
        <taxon>Chlamydiia</taxon>
        <taxon>Chlamydiales</taxon>
        <taxon>Chlamydiaceae</taxon>
        <taxon>Chlamydia/Chlamydophila group</taxon>
        <taxon>Chlamydia</taxon>
    </lineage>
</organism>
<dbReference type="EC" id="2.7.2.4"/>
<dbReference type="EMBL" id="AE002160">
    <property type="protein sequence ID" value="AAF39470.1"/>
    <property type="molecule type" value="Genomic_DNA"/>
</dbReference>
<dbReference type="PIR" id="D81681">
    <property type="entry name" value="D81681"/>
</dbReference>
<dbReference type="RefSeq" id="WP_010231084.1">
    <property type="nucleotide sequence ID" value="NZ_CP063055.1"/>
</dbReference>
<dbReference type="SMR" id="Q9PK32"/>
<dbReference type="GeneID" id="1246002"/>
<dbReference type="KEGG" id="cmu:TC_0641"/>
<dbReference type="eggNOG" id="COG0527">
    <property type="taxonomic scope" value="Bacteria"/>
</dbReference>
<dbReference type="HOGENOM" id="CLU_009116_6_0_0"/>
<dbReference type="OrthoDB" id="9799110at2"/>
<dbReference type="UniPathway" id="UPA00034">
    <property type="reaction ID" value="UER00015"/>
</dbReference>
<dbReference type="UniPathway" id="UPA00050">
    <property type="reaction ID" value="UER00461"/>
</dbReference>
<dbReference type="UniPathway" id="UPA00051">
    <property type="reaction ID" value="UER00462"/>
</dbReference>
<dbReference type="Proteomes" id="UP000000800">
    <property type="component" value="Chromosome"/>
</dbReference>
<dbReference type="GO" id="GO:0005829">
    <property type="term" value="C:cytosol"/>
    <property type="evidence" value="ECO:0007669"/>
    <property type="project" value="TreeGrafter"/>
</dbReference>
<dbReference type="GO" id="GO:0004072">
    <property type="term" value="F:aspartate kinase activity"/>
    <property type="evidence" value="ECO:0007669"/>
    <property type="project" value="UniProtKB-EC"/>
</dbReference>
<dbReference type="GO" id="GO:0005524">
    <property type="term" value="F:ATP binding"/>
    <property type="evidence" value="ECO:0007669"/>
    <property type="project" value="UniProtKB-KW"/>
</dbReference>
<dbReference type="GO" id="GO:0019877">
    <property type="term" value="P:diaminopimelate biosynthetic process"/>
    <property type="evidence" value="ECO:0007669"/>
    <property type="project" value="UniProtKB-KW"/>
</dbReference>
<dbReference type="GO" id="GO:0009090">
    <property type="term" value="P:homoserine biosynthetic process"/>
    <property type="evidence" value="ECO:0007669"/>
    <property type="project" value="TreeGrafter"/>
</dbReference>
<dbReference type="GO" id="GO:0009089">
    <property type="term" value="P:lysine biosynthetic process via diaminopimelate"/>
    <property type="evidence" value="ECO:0007669"/>
    <property type="project" value="UniProtKB-UniPathway"/>
</dbReference>
<dbReference type="GO" id="GO:0009088">
    <property type="term" value="P:threonine biosynthetic process"/>
    <property type="evidence" value="ECO:0007669"/>
    <property type="project" value="UniProtKB-UniPathway"/>
</dbReference>
<dbReference type="CDD" id="cd04243">
    <property type="entry name" value="AAK_AK-HSDH-like"/>
    <property type="match status" value="1"/>
</dbReference>
<dbReference type="Gene3D" id="3.40.1160.10">
    <property type="entry name" value="Acetylglutamate kinase-like"/>
    <property type="match status" value="1"/>
</dbReference>
<dbReference type="Gene3D" id="1.20.120.1320">
    <property type="entry name" value="Aspartokinase, catalytic domain"/>
    <property type="match status" value="1"/>
</dbReference>
<dbReference type="InterPro" id="IPR036393">
    <property type="entry name" value="AceGlu_kinase-like_sf"/>
</dbReference>
<dbReference type="InterPro" id="IPR001048">
    <property type="entry name" value="Asp/Glu/Uridylate_kinase"/>
</dbReference>
<dbReference type="InterPro" id="IPR001341">
    <property type="entry name" value="Asp_kinase"/>
</dbReference>
<dbReference type="InterPro" id="IPR042199">
    <property type="entry name" value="AsparK_Bifunc_asparK/hSer_DH"/>
</dbReference>
<dbReference type="InterPro" id="IPR018042">
    <property type="entry name" value="Aspartate_kinase_CS"/>
</dbReference>
<dbReference type="NCBIfam" id="TIGR00657">
    <property type="entry name" value="asp_kinases"/>
    <property type="match status" value="1"/>
</dbReference>
<dbReference type="NCBIfam" id="NF004579">
    <property type="entry name" value="PRK05925.1"/>
    <property type="match status" value="1"/>
</dbReference>
<dbReference type="PANTHER" id="PTHR21499">
    <property type="entry name" value="ASPARTATE KINASE"/>
    <property type="match status" value="1"/>
</dbReference>
<dbReference type="PANTHER" id="PTHR21499:SF3">
    <property type="entry name" value="ASPARTOKINASE"/>
    <property type="match status" value="1"/>
</dbReference>
<dbReference type="Pfam" id="PF00696">
    <property type="entry name" value="AA_kinase"/>
    <property type="match status" value="1"/>
</dbReference>
<dbReference type="SUPFAM" id="SSF53633">
    <property type="entry name" value="Carbamate kinase-like"/>
    <property type="match status" value="1"/>
</dbReference>
<dbReference type="PROSITE" id="PS00324">
    <property type="entry name" value="ASPARTOKINASE"/>
    <property type="match status" value="1"/>
</dbReference>
<accession>Q9PK32</accession>
<reference key="1">
    <citation type="journal article" date="2000" name="Nucleic Acids Res.">
        <title>Genome sequences of Chlamydia trachomatis MoPn and Chlamydia pneumoniae AR39.</title>
        <authorList>
            <person name="Read T.D."/>
            <person name="Brunham R.C."/>
            <person name="Shen C."/>
            <person name="Gill S.R."/>
            <person name="Heidelberg J.F."/>
            <person name="White O."/>
            <person name="Hickey E.K."/>
            <person name="Peterson J.D."/>
            <person name="Utterback T.R."/>
            <person name="Berry K.J."/>
            <person name="Bass S."/>
            <person name="Linher K.D."/>
            <person name="Weidman J.F."/>
            <person name="Khouri H.M."/>
            <person name="Craven B."/>
            <person name="Bowman C."/>
            <person name="Dodson R.J."/>
            <person name="Gwinn M.L."/>
            <person name="Nelson W.C."/>
            <person name="DeBoy R.T."/>
            <person name="Kolonay J.F."/>
            <person name="McClarty G."/>
            <person name="Salzberg S.L."/>
            <person name="Eisen J.A."/>
            <person name="Fraser C.M."/>
        </authorList>
    </citation>
    <scope>NUCLEOTIDE SEQUENCE [LARGE SCALE GENOMIC DNA]</scope>
    <source>
        <strain>MoPn / Nigg</strain>
    </source>
</reference>
<protein>
    <recommendedName>
        <fullName>Aspartokinase</fullName>
        <ecNumber>2.7.2.4</ecNumber>
    </recommendedName>
    <alternativeName>
        <fullName>Aspartate kinase</fullName>
    </alternativeName>
</protein>
<feature type="chain" id="PRO_0000066673" description="Aspartokinase">
    <location>
        <begin position="1"/>
        <end position="437"/>
    </location>
</feature>
<proteinExistence type="inferred from homology"/>
<name>AK_CHLMU</name>
<gene>
    <name type="primary">lysC</name>
    <name type="ordered locus">TC_0641</name>
</gene>